<accession>B3CM21</accession>
<gene>
    <name evidence="1" type="primary">pnp</name>
    <name type="ordered locus">WP0831</name>
</gene>
<reference key="1">
    <citation type="journal article" date="2008" name="Mol. Biol. Evol.">
        <title>Genome evolution of Wolbachia strain wPip from the Culex pipiens group.</title>
        <authorList>
            <person name="Klasson L."/>
            <person name="Walker T."/>
            <person name="Sebaihia M."/>
            <person name="Sanders M.J."/>
            <person name="Quail M.A."/>
            <person name="Lord A."/>
            <person name="Sanders S."/>
            <person name="Earl J."/>
            <person name="O'Neill S.L."/>
            <person name="Thomson N."/>
            <person name="Sinkins S.P."/>
            <person name="Parkhill J."/>
        </authorList>
    </citation>
    <scope>NUCLEOTIDE SEQUENCE [LARGE SCALE GENOMIC DNA]</scope>
    <source>
        <strain>wPip</strain>
    </source>
</reference>
<proteinExistence type="inferred from homology"/>
<name>PNP_WOLPP</name>
<protein>
    <recommendedName>
        <fullName evidence="1">Polyribonucleotide nucleotidyltransferase</fullName>
        <ecNumber evidence="1">2.7.7.8</ecNumber>
    </recommendedName>
    <alternativeName>
        <fullName evidence="1">Polynucleotide phosphorylase</fullName>
        <shortName evidence="1">PNPase</shortName>
    </alternativeName>
</protein>
<feature type="chain" id="PRO_1000192505" description="Polyribonucleotide nucleotidyltransferase">
    <location>
        <begin position="1"/>
        <end position="758"/>
    </location>
</feature>
<feature type="domain" description="KH" evidence="1">
    <location>
        <begin position="549"/>
        <end position="608"/>
    </location>
</feature>
<feature type="domain" description="S1 motif" evidence="1">
    <location>
        <begin position="618"/>
        <end position="686"/>
    </location>
</feature>
<feature type="region of interest" description="Disordered" evidence="2">
    <location>
        <begin position="707"/>
        <end position="758"/>
    </location>
</feature>
<feature type="compositionally biased region" description="Low complexity" evidence="2">
    <location>
        <begin position="711"/>
        <end position="721"/>
    </location>
</feature>
<feature type="binding site" evidence="1">
    <location>
        <position position="482"/>
    </location>
    <ligand>
        <name>Mg(2+)</name>
        <dbReference type="ChEBI" id="CHEBI:18420"/>
    </ligand>
</feature>
<feature type="binding site" evidence="1">
    <location>
        <position position="488"/>
    </location>
    <ligand>
        <name>Mg(2+)</name>
        <dbReference type="ChEBI" id="CHEBI:18420"/>
    </ligand>
</feature>
<dbReference type="EC" id="2.7.7.8" evidence="1"/>
<dbReference type="EMBL" id="AM999887">
    <property type="protein sequence ID" value="CAQ54939.1"/>
    <property type="molecule type" value="Genomic_DNA"/>
</dbReference>
<dbReference type="RefSeq" id="WP_012481924.1">
    <property type="nucleotide sequence ID" value="NC_010981.1"/>
</dbReference>
<dbReference type="SMR" id="B3CM21"/>
<dbReference type="KEGG" id="wpi:WP0831"/>
<dbReference type="eggNOG" id="COG1185">
    <property type="taxonomic scope" value="Bacteria"/>
</dbReference>
<dbReference type="HOGENOM" id="CLU_004217_2_2_5"/>
<dbReference type="Proteomes" id="UP000008814">
    <property type="component" value="Chromosome"/>
</dbReference>
<dbReference type="GO" id="GO:0005829">
    <property type="term" value="C:cytosol"/>
    <property type="evidence" value="ECO:0007669"/>
    <property type="project" value="TreeGrafter"/>
</dbReference>
<dbReference type="GO" id="GO:0000175">
    <property type="term" value="F:3'-5'-RNA exonuclease activity"/>
    <property type="evidence" value="ECO:0007669"/>
    <property type="project" value="TreeGrafter"/>
</dbReference>
<dbReference type="GO" id="GO:0000287">
    <property type="term" value="F:magnesium ion binding"/>
    <property type="evidence" value="ECO:0007669"/>
    <property type="project" value="UniProtKB-UniRule"/>
</dbReference>
<dbReference type="GO" id="GO:0004654">
    <property type="term" value="F:polyribonucleotide nucleotidyltransferase activity"/>
    <property type="evidence" value="ECO:0007669"/>
    <property type="project" value="UniProtKB-UniRule"/>
</dbReference>
<dbReference type="GO" id="GO:0003723">
    <property type="term" value="F:RNA binding"/>
    <property type="evidence" value="ECO:0007669"/>
    <property type="project" value="UniProtKB-UniRule"/>
</dbReference>
<dbReference type="GO" id="GO:0006402">
    <property type="term" value="P:mRNA catabolic process"/>
    <property type="evidence" value="ECO:0007669"/>
    <property type="project" value="UniProtKB-UniRule"/>
</dbReference>
<dbReference type="GO" id="GO:0006396">
    <property type="term" value="P:RNA processing"/>
    <property type="evidence" value="ECO:0007669"/>
    <property type="project" value="InterPro"/>
</dbReference>
<dbReference type="CDD" id="cd02393">
    <property type="entry name" value="KH-I_PNPase"/>
    <property type="match status" value="1"/>
</dbReference>
<dbReference type="CDD" id="cd11364">
    <property type="entry name" value="RNase_PH_PNPase_2"/>
    <property type="match status" value="1"/>
</dbReference>
<dbReference type="FunFam" id="3.30.1370.10:FF:000001">
    <property type="entry name" value="Polyribonucleotide nucleotidyltransferase"/>
    <property type="match status" value="1"/>
</dbReference>
<dbReference type="FunFam" id="3.30.230.70:FF:000001">
    <property type="entry name" value="Polyribonucleotide nucleotidyltransferase"/>
    <property type="match status" value="1"/>
</dbReference>
<dbReference type="FunFam" id="3.30.230.70:FF:000002">
    <property type="entry name" value="Polyribonucleotide nucleotidyltransferase"/>
    <property type="match status" value="1"/>
</dbReference>
<dbReference type="Gene3D" id="3.30.230.70">
    <property type="entry name" value="GHMP Kinase, N-terminal domain"/>
    <property type="match status" value="2"/>
</dbReference>
<dbReference type="Gene3D" id="3.30.1370.10">
    <property type="entry name" value="K Homology domain, type 1"/>
    <property type="match status" value="1"/>
</dbReference>
<dbReference type="Gene3D" id="2.40.50.140">
    <property type="entry name" value="Nucleic acid-binding proteins"/>
    <property type="match status" value="1"/>
</dbReference>
<dbReference type="HAMAP" id="MF_01595">
    <property type="entry name" value="PNPase"/>
    <property type="match status" value="1"/>
</dbReference>
<dbReference type="InterPro" id="IPR001247">
    <property type="entry name" value="ExoRNase_PH_dom1"/>
</dbReference>
<dbReference type="InterPro" id="IPR015847">
    <property type="entry name" value="ExoRNase_PH_dom2"/>
</dbReference>
<dbReference type="InterPro" id="IPR036345">
    <property type="entry name" value="ExoRNase_PH_dom2_sf"/>
</dbReference>
<dbReference type="InterPro" id="IPR004087">
    <property type="entry name" value="KH_dom"/>
</dbReference>
<dbReference type="InterPro" id="IPR004088">
    <property type="entry name" value="KH_dom_type_1"/>
</dbReference>
<dbReference type="InterPro" id="IPR036612">
    <property type="entry name" value="KH_dom_type_1_sf"/>
</dbReference>
<dbReference type="InterPro" id="IPR012340">
    <property type="entry name" value="NA-bd_OB-fold"/>
</dbReference>
<dbReference type="InterPro" id="IPR012162">
    <property type="entry name" value="PNPase"/>
</dbReference>
<dbReference type="InterPro" id="IPR027408">
    <property type="entry name" value="PNPase/RNase_PH_dom_sf"/>
</dbReference>
<dbReference type="InterPro" id="IPR015848">
    <property type="entry name" value="PNPase_PH_RNA-bd_bac/org-type"/>
</dbReference>
<dbReference type="InterPro" id="IPR020568">
    <property type="entry name" value="Ribosomal_Su5_D2-typ_SF"/>
</dbReference>
<dbReference type="InterPro" id="IPR003029">
    <property type="entry name" value="S1_domain"/>
</dbReference>
<dbReference type="NCBIfam" id="TIGR03591">
    <property type="entry name" value="polynuc_phos"/>
    <property type="match status" value="1"/>
</dbReference>
<dbReference type="NCBIfam" id="NF008805">
    <property type="entry name" value="PRK11824.1"/>
    <property type="match status" value="1"/>
</dbReference>
<dbReference type="PANTHER" id="PTHR11252">
    <property type="entry name" value="POLYRIBONUCLEOTIDE NUCLEOTIDYLTRANSFERASE"/>
    <property type="match status" value="1"/>
</dbReference>
<dbReference type="PANTHER" id="PTHR11252:SF0">
    <property type="entry name" value="POLYRIBONUCLEOTIDE NUCLEOTIDYLTRANSFERASE 1, MITOCHONDRIAL"/>
    <property type="match status" value="1"/>
</dbReference>
<dbReference type="Pfam" id="PF00013">
    <property type="entry name" value="KH_1"/>
    <property type="match status" value="1"/>
</dbReference>
<dbReference type="Pfam" id="PF03726">
    <property type="entry name" value="PNPase"/>
    <property type="match status" value="1"/>
</dbReference>
<dbReference type="Pfam" id="PF01138">
    <property type="entry name" value="RNase_PH"/>
    <property type="match status" value="2"/>
</dbReference>
<dbReference type="Pfam" id="PF03725">
    <property type="entry name" value="RNase_PH_C"/>
    <property type="match status" value="2"/>
</dbReference>
<dbReference type="Pfam" id="PF00575">
    <property type="entry name" value="S1"/>
    <property type="match status" value="1"/>
</dbReference>
<dbReference type="PIRSF" id="PIRSF005499">
    <property type="entry name" value="PNPase"/>
    <property type="match status" value="1"/>
</dbReference>
<dbReference type="SMART" id="SM00322">
    <property type="entry name" value="KH"/>
    <property type="match status" value="1"/>
</dbReference>
<dbReference type="SMART" id="SM00316">
    <property type="entry name" value="S1"/>
    <property type="match status" value="1"/>
</dbReference>
<dbReference type="SUPFAM" id="SSF54791">
    <property type="entry name" value="Eukaryotic type KH-domain (KH-domain type I)"/>
    <property type="match status" value="1"/>
</dbReference>
<dbReference type="SUPFAM" id="SSF50249">
    <property type="entry name" value="Nucleic acid-binding proteins"/>
    <property type="match status" value="1"/>
</dbReference>
<dbReference type="SUPFAM" id="SSF55666">
    <property type="entry name" value="Ribonuclease PH domain 2-like"/>
    <property type="match status" value="2"/>
</dbReference>
<dbReference type="SUPFAM" id="SSF54211">
    <property type="entry name" value="Ribosomal protein S5 domain 2-like"/>
    <property type="match status" value="2"/>
</dbReference>
<dbReference type="PROSITE" id="PS50084">
    <property type="entry name" value="KH_TYPE_1"/>
    <property type="match status" value="1"/>
</dbReference>
<dbReference type="PROSITE" id="PS50126">
    <property type="entry name" value="S1"/>
    <property type="match status" value="1"/>
</dbReference>
<keyword id="KW-0963">Cytoplasm</keyword>
<keyword id="KW-0460">Magnesium</keyword>
<keyword id="KW-0479">Metal-binding</keyword>
<keyword id="KW-0548">Nucleotidyltransferase</keyword>
<keyword id="KW-0694">RNA-binding</keyword>
<keyword id="KW-0808">Transferase</keyword>
<organism>
    <name type="scientific">Wolbachia pipientis subsp. Culex pipiens (strain wPip)</name>
    <dbReference type="NCBI Taxonomy" id="570417"/>
    <lineage>
        <taxon>Bacteria</taxon>
        <taxon>Pseudomonadati</taxon>
        <taxon>Pseudomonadota</taxon>
        <taxon>Alphaproteobacteria</taxon>
        <taxon>Rickettsiales</taxon>
        <taxon>Anaplasmataceae</taxon>
        <taxon>Wolbachieae</taxon>
        <taxon>Wolbachia</taxon>
    </lineage>
</organism>
<sequence length="758" mass="84663">MFEIIKKSIDWEGRTLSLETGKIARQADGSVVVNYGDTSILVTVVRKKKEESVDFLPLNVQFIAKSYAMGKIPGGFFKREGKPSDRETLISRVIDRSIRPLFPEGFHDEISVVCNLLTYDTVNSPEVPALIGTVAALAISGVPFHFTIAGVMVGCDENNNYILNPSVQEMKASNLDLFLSGDENSILMVESEVKELSEENVLNAIKFGHEHLQPVIKLIKEFADTVGNKPESFAPVDISDITQELEKYRKDFEEAYSKTVKQERVQALEVVRNNILNTLKEAGKDEKLITYAVKSFERSLVREMIRRKSVRIDSRKYDEIRQIEIEADILPKTHGSALFTRGSTQALVVTALGTTQDEQIVDDIEGDRREHFMLHYNFPPFAVGEASAIRAPGRREIGHGKLAWKAIHPVLPDKSEFPYTIRVVSEIMESDGSSSMATVCGTSIALMDTGVPIKAPVAGIAMGLIKDKNEHIILSDILGDEDYLGDMDFKVAGTSEGITALQMDMKIPGISFEIVEKSLEQAKVGRLHILEKMNAVISEHRKDIKDHVPRVLSFYIDKDKISAAIGTKGKNIRSVCERSNAKIEIGDDGKVSVFAISSTEAEAAKNMMIDSITELEQGSIIDAKVVKIEKSIVELELLNGRKGKMHISEVANQHVESIEDILKQGDTFKALIIDFEKGGCPKLSRRRVDQETGEFFEGKLYNEERRDGLNNRDNYYNNSFNKKPEDNYHSNRPTRPRSGFSNRSRPKFGNNDSSSGFY</sequence>
<evidence type="ECO:0000255" key="1">
    <source>
        <dbReference type="HAMAP-Rule" id="MF_01595"/>
    </source>
</evidence>
<evidence type="ECO:0000256" key="2">
    <source>
        <dbReference type="SAM" id="MobiDB-lite"/>
    </source>
</evidence>
<comment type="function">
    <text evidence="1">Involved in mRNA degradation. Catalyzes the phosphorolysis of single-stranded polyribonucleotides processively in the 3'- to 5'-direction.</text>
</comment>
<comment type="catalytic activity">
    <reaction evidence="1">
        <text>RNA(n+1) + phosphate = RNA(n) + a ribonucleoside 5'-diphosphate</text>
        <dbReference type="Rhea" id="RHEA:22096"/>
        <dbReference type="Rhea" id="RHEA-COMP:14527"/>
        <dbReference type="Rhea" id="RHEA-COMP:17342"/>
        <dbReference type="ChEBI" id="CHEBI:43474"/>
        <dbReference type="ChEBI" id="CHEBI:57930"/>
        <dbReference type="ChEBI" id="CHEBI:140395"/>
        <dbReference type="EC" id="2.7.7.8"/>
    </reaction>
</comment>
<comment type="cofactor">
    <cofactor evidence="1">
        <name>Mg(2+)</name>
        <dbReference type="ChEBI" id="CHEBI:18420"/>
    </cofactor>
</comment>
<comment type="subcellular location">
    <subcellularLocation>
        <location evidence="1">Cytoplasm</location>
    </subcellularLocation>
</comment>
<comment type="similarity">
    <text evidence="1">Belongs to the polyribonucleotide nucleotidyltransferase family.</text>
</comment>